<reference key="1">
    <citation type="journal article" date="2003" name="Proc. Natl. Acad. Sci. U.S.A.">
        <title>The complete genome sequence of Mycobacterium bovis.</title>
        <authorList>
            <person name="Garnier T."/>
            <person name="Eiglmeier K."/>
            <person name="Camus J.-C."/>
            <person name="Medina N."/>
            <person name="Mansoor H."/>
            <person name="Pryor M."/>
            <person name="Duthoy S."/>
            <person name="Grondin S."/>
            <person name="Lacroix C."/>
            <person name="Monsempe C."/>
            <person name="Simon S."/>
            <person name="Harris B."/>
            <person name="Atkin R."/>
            <person name="Doggett J."/>
            <person name="Mayes R."/>
            <person name="Keating L."/>
            <person name="Wheeler P.R."/>
            <person name="Parkhill J."/>
            <person name="Barrell B.G."/>
            <person name="Cole S.T."/>
            <person name="Gordon S.V."/>
            <person name="Hewinson R.G."/>
        </authorList>
    </citation>
    <scope>NUCLEOTIDE SEQUENCE [LARGE SCALE GENOMIC DNA]</scope>
    <source>
        <strain>ATCC BAA-935 / AF2122/97</strain>
    </source>
</reference>
<reference key="2">
    <citation type="journal article" date="2017" name="Genome Announc.">
        <title>Updated reference genome sequence and annotation of Mycobacterium bovis AF2122/97.</title>
        <authorList>
            <person name="Malone K.M."/>
            <person name="Farrell D."/>
            <person name="Stuber T.P."/>
            <person name="Schubert O.T."/>
            <person name="Aebersold R."/>
            <person name="Robbe-Austerman S."/>
            <person name="Gordon S.V."/>
        </authorList>
    </citation>
    <scope>NUCLEOTIDE SEQUENCE [LARGE SCALE GENOMIC DNA]</scope>
    <scope>GENOME REANNOTATION</scope>
    <source>
        <strain>ATCC BAA-935 / AF2122/97</strain>
    </source>
</reference>
<feature type="chain" id="PRO_0000103959" description="Uncharacterized protein Mb2113">
    <location>
        <begin position="1"/>
        <end position="201"/>
    </location>
</feature>
<feature type="region of interest" description="Disordered" evidence="1">
    <location>
        <begin position="121"/>
        <end position="141"/>
    </location>
</feature>
<name>Y2113_MYCBO</name>
<keyword id="KW-1185">Reference proteome</keyword>
<dbReference type="EMBL" id="LT708304">
    <property type="protein sequence ID" value="SIU00720.1"/>
    <property type="molecule type" value="Genomic_DNA"/>
</dbReference>
<dbReference type="RefSeq" id="NP_855762.1">
    <property type="nucleotide sequence ID" value="NC_002945.3"/>
</dbReference>
<dbReference type="KEGG" id="mbo:BQ2027_MB2113"/>
<dbReference type="PATRIC" id="fig|233413.5.peg.2323"/>
<dbReference type="Proteomes" id="UP000001419">
    <property type="component" value="Chromosome"/>
</dbReference>
<organism>
    <name type="scientific">Mycobacterium bovis (strain ATCC BAA-935 / AF2122/97)</name>
    <dbReference type="NCBI Taxonomy" id="233413"/>
    <lineage>
        <taxon>Bacteria</taxon>
        <taxon>Bacillati</taxon>
        <taxon>Actinomycetota</taxon>
        <taxon>Actinomycetes</taxon>
        <taxon>Mycobacteriales</taxon>
        <taxon>Mycobacteriaceae</taxon>
        <taxon>Mycobacterium</taxon>
        <taxon>Mycobacterium tuberculosis complex</taxon>
    </lineage>
</organism>
<protein>
    <recommendedName>
        <fullName>Uncharacterized protein Mb2113</fullName>
    </recommendedName>
</protein>
<evidence type="ECO:0000256" key="1">
    <source>
        <dbReference type="SAM" id="MobiDB-lite"/>
    </source>
</evidence>
<accession>P64938</accession>
<accession>A0A1R3Y078</accession>
<accession>Q10694</accession>
<accession>X2BK12</accession>
<sequence length="201" mass="22518">MRPATPLICAFGDKHKHTYGVTPICRALAVHGVQIASRTYFADRAAAPSKRALWDTTITEILAGYYEPDAEGKRPPECLYGSLKMWAHLQRQGFRWPSATVKTIMRANGWRGVPLAAHITHHRTRPGRGPGPRPGGSAMAGFSNEPAGSGRLHLRADDVEFRLHRVRGRRLRRCDRGLGMLADQRRSVRRTRITPRPSRLT</sequence>
<proteinExistence type="predicted"/>
<gene>
    <name type="ordered locus">BQ2027_MB2113</name>
</gene>